<protein>
    <recommendedName>
        <fullName evidence="1">Heat-inducible transcription repressor HrcA</fullName>
    </recommendedName>
</protein>
<accession>A3MNA5</accession>
<feature type="chain" id="PRO_1000010385" description="Heat-inducible transcription repressor HrcA">
    <location>
        <begin position="1"/>
        <end position="340"/>
    </location>
</feature>
<comment type="function">
    <text evidence="1">Negative regulator of class I heat shock genes (grpE-dnaK-dnaJ and groELS operons). Prevents heat-shock induction of these operons.</text>
</comment>
<comment type="similarity">
    <text evidence="1">Belongs to the HrcA family.</text>
</comment>
<gene>
    <name evidence="1" type="primary">hrcA</name>
    <name type="ordered locus">BMA10247_2212</name>
</gene>
<organism>
    <name type="scientific">Burkholderia mallei (strain NCTC 10247)</name>
    <dbReference type="NCBI Taxonomy" id="320389"/>
    <lineage>
        <taxon>Bacteria</taxon>
        <taxon>Pseudomonadati</taxon>
        <taxon>Pseudomonadota</taxon>
        <taxon>Betaproteobacteria</taxon>
        <taxon>Burkholderiales</taxon>
        <taxon>Burkholderiaceae</taxon>
        <taxon>Burkholderia</taxon>
        <taxon>pseudomallei group</taxon>
    </lineage>
</organism>
<reference key="1">
    <citation type="journal article" date="2010" name="Genome Biol. Evol.">
        <title>Continuing evolution of Burkholderia mallei through genome reduction and large-scale rearrangements.</title>
        <authorList>
            <person name="Losada L."/>
            <person name="Ronning C.M."/>
            <person name="DeShazer D."/>
            <person name="Woods D."/>
            <person name="Fedorova N."/>
            <person name="Kim H.S."/>
            <person name="Shabalina S.A."/>
            <person name="Pearson T.R."/>
            <person name="Brinkac L."/>
            <person name="Tan P."/>
            <person name="Nandi T."/>
            <person name="Crabtree J."/>
            <person name="Badger J."/>
            <person name="Beckstrom-Sternberg S."/>
            <person name="Saqib M."/>
            <person name="Schutzer S.E."/>
            <person name="Keim P."/>
            <person name="Nierman W.C."/>
        </authorList>
    </citation>
    <scope>NUCLEOTIDE SEQUENCE [LARGE SCALE GENOMIC DNA]</scope>
    <source>
        <strain>NCTC 10247</strain>
    </source>
</reference>
<evidence type="ECO:0000255" key="1">
    <source>
        <dbReference type="HAMAP-Rule" id="MF_00081"/>
    </source>
</evidence>
<sequence length="340" mass="37426">MLDPRARTLLKTLIERYIADGQPVGSRTLSRYSGLELSPATIRNVMSDLEELGLVSSPHTSAGRVPTPRGYRLFVDTMLTVESPIDSDAVTRLVQTTLQAGEPQQRVVAAAASVLSNLSQFAGVVLTPRRSHVFKQIEFLRLSDKRILLIIVTPEGDVQNRMIATQRDYAPAQLTEASNYINAHFAGLSFDEVRRRLREEIDQLRGDMTALMHAAVTASTEEPDDEETVLISGERNLLEVADLSSDMARLRKLFDVFDQKTSLLQLLDVSSHAQGVQIFIGGESTLVPIDEMSVVTAPYEVNGKIVGTLGVIGPTRMAYNRVIPIVDITARLLSLTLSQQ</sequence>
<proteinExistence type="inferred from homology"/>
<name>HRCA_BURM7</name>
<keyword id="KW-0678">Repressor</keyword>
<keyword id="KW-0346">Stress response</keyword>
<keyword id="KW-0804">Transcription</keyword>
<keyword id="KW-0805">Transcription regulation</keyword>
<dbReference type="EMBL" id="CP000548">
    <property type="protein sequence ID" value="ABO07314.1"/>
    <property type="molecule type" value="Genomic_DNA"/>
</dbReference>
<dbReference type="RefSeq" id="WP_004194248.1">
    <property type="nucleotide sequence ID" value="NZ_CP007802.1"/>
</dbReference>
<dbReference type="SMR" id="A3MNA5"/>
<dbReference type="GeneID" id="93061421"/>
<dbReference type="KEGG" id="bmaz:BM44_1031"/>
<dbReference type="KEGG" id="bmn:BMA10247_2212"/>
<dbReference type="PATRIC" id="fig|320389.8.peg.1151"/>
<dbReference type="GO" id="GO:0003677">
    <property type="term" value="F:DNA binding"/>
    <property type="evidence" value="ECO:0007669"/>
    <property type="project" value="InterPro"/>
</dbReference>
<dbReference type="GO" id="GO:0045892">
    <property type="term" value="P:negative regulation of DNA-templated transcription"/>
    <property type="evidence" value="ECO:0007669"/>
    <property type="project" value="UniProtKB-UniRule"/>
</dbReference>
<dbReference type="Gene3D" id="3.30.450.40">
    <property type="match status" value="1"/>
</dbReference>
<dbReference type="Gene3D" id="3.30.390.60">
    <property type="entry name" value="Heat-inducible transcription repressor hrca homolog, domain 3"/>
    <property type="match status" value="1"/>
</dbReference>
<dbReference type="Gene3D" id="1.10.10.10">
    <property type="entry name" value="Winged helix-like DNA-binding domain superfamily/Winged helix DNA-binding domain"/>
    <property type="match status" value="1"/>
</dbReference>
<dbReference type="HAMAP" id="MF_00081">
    <property type="entry name" value="HrcA"/>
    <property type="match status" value="1"/>
</dbReference>
<dbReference type="InterPro" id="IPR029016">
    <property type="entry name" value="GAF-like_dom_sf"/>
</dbReference>
<dbReference type="InterPro" id="IPR002571">
    <property type="entry name" value="HrcA"/>
</dbReference>
<dbReference type="InterPro" id="IPR021153">
    <property type="entry name" value="HrcA_C"/>
</dbReference>
<dbReference type="InterPro" id="IPR036388">
    <property type="entry name" value="WH-like_DNA-bd_sf"/>
</dbReference>
<dbReference type="InterPro" id="IPR036390">
    <property type="entry name" value="WH_DNA-bd_sf"/>
</dbReference>
<dbReference type="InterPro" id="IPR005104">
    <property type="entry name" value="WHTH_HrcA_DNA-bd"/>
</dbReference>
<dbReference type="InterPro" id="IPR023120">
    <property type="entry name" value="WHTH_transcript_rep_HrcA_IDD"/>
</dbReference>
<dbReference type="NCBIfam" id="TIGR00331">
    <property type="entry name" value="hrcA"/>
    <property type="match status" value="1"/>
</dbReference>
<dbReference type="PANTHER" id="PTHR34824">
    <property type="entry name" value="HEAT-INDUCIBLE TRANSCRIPTION REPRESSOR HRCA"/>
    <property type="match status" value="1"/>
</dbReference>
<dbReference type="PANTHER" id="PTHR34824:SF1">
    <property type="entry name" value="HEAT-INDUCIBLE TRANSCRIPTION REPRESSOR HRCA"/>
    <property type="match status" value="1"/>
</dbReference>
<dbReference type="Pfam" id="PF01628">
    <property type="entry name" value="HrcA"/>
    <property type="match status" value="1"/>
</dbReference>
<dbReference type="Pfam" id="PF03444">
    <property type="entry name" value="HrcA_DNA-bdg"/>
    <property type="match status" value="1"/>
</dbReference>
<dbReference type="PIRSF" id="PIRSF005485">
    <property type="entry name" value="HrcA"/>
    <property type="match status" value="1"/>
</dbReference>
<dbReference type="SUPFAM" id="SSF55781">
    <property type="entry name" value="GAF domain-like"/>
    <property type="match status" value="1"/>
</dbReference>
<dbReference type="SUPFAM" id="SSF46785">
    <property type="entry name" value="Winged helix' DNA-binding domain"/>
    <property type="match status" value="1"/>
</dbReference>